<sequence>MWKGLLQSTRAAWRGPCVRAPRLPFFRRYSLCVDPEIAALSGPELEARIAAIPIERYRNFSIVAHVDHGKSTLSDRLLELTGVIAAGGQKQFLDKLDVERERGITVKAQTCTMLYKHKGEDYLLHLVDTPGHVDFRAEVSRSYASCGGALLLVDASQGVQAQTVANFFLAFSLNLTLLPVINKIDLEVADIPRSMDQIESTFELPTDNVLQVSAKTGLNVDQILPNVIENIPGPDGKLEDPLRALIVDSWYDNYLGVVLLTYVRDGVVSRGTKVISHHTGRKYDVKEVGIMYPGSVKTKELKAGQVGYMALGMKSSSEAHTGDTLIKVNSNAEPLPGFAETKPMVFVGVFPGEGMDFADLEESLQHLTLNDRSVTMTKATSQALGQGWRMGFLGTLHASVFEDRLLQEHGAHVIITAPSVPYRVVYHPRGKETEPTIVEIDNPANFPDLQLEKARIQSLEEPMVACTMTLPQEYIGSVMSLCEANRGEQVDMNYLNQTQVLLKYRIPLNQLVEDFFGKLKAASQGFASLDYEEDGYMASKLVRLDMCVNGEVVDALSQVMHVSQAETRARDWVEKFKTFLRWHQFDVIIQAKIGNKILARETIKARKKDVLAKLHAADLSRKAKLLKNQKAGKNRLQTAGRVNIPKEAFSGFLSKT</sequence>
<reference key="1">
    <citation type="journal article" date="2004" name="Nature">
        <title>Genome evolution in yeasts.</title>
        <authorList>
            <person name="Dujon B."/>
            <person name="Sherman D."/>
            <person name="Fischer G."/>
            <person name="Durrens P."/>
            <person name="Casaregola S."/>
            <person name="Lafontaine I."/>
            <person name="de Montigny J."/>
            <person name="Marck C."/>
            <person name="Neuveglise C."/>
            <person name="Talla E."/>
            <person name="Goffard N."/>
            <person name="Frangeul L."/>
            <person name="Aigle M."/>
            <person name="Anthouard V."/>
            <person name="Babour A."/>
            <person name="Barbe V."/>
            <person name="Barnay S."/>
            <person name="Blanchin S."/>
            <person name="Beckerich J.-M."/>
            <person name="Beyne E."/>
            <person name="Bleykasten C."/>
            <person name="Boisrame A."/>
            <person name="Boyer J."/>
            <person name="Cattolico L."/>
            <person name="Confanioleri F."/>
            <person name="de Daruvar A."/>
            <person name="Despons L."/>
            <person name="Fabre E."/>
            <person name="Fairhead C."/>
            <person name="Ferry-Dumazet H."/>
            <person name="Groppi A."/>
            <person name="Hantraye F."/>
            <person name="Hennequin C."/>
            <person name="Jauniaux N."/>
            <person name="Joyet P."/>
            <person name="Kachouri R."/>
            <person name="Kerrest A."/>
            <person name="Koszul R."/>
            <person name="Lemaire M."/>
            <person name="Lesur I."/>
            <person name="Ma L."/>
            <person name="Muller H."/>
            <person name="Nicaud J.-M."/>
            <person name="Nikolski M."/>
            <person name="Oztas S."/>
            <person name="Ozier-Kalogeropoulos O."/>
            <person name="Pellenz S."/>
            <person name="Potier S."/>
            <person name="Richard G.-F."/>
            <person name="Straub M.-L."/>
            <person name="Suleau A."/>
            <person name="Swennen D."/>
            <person name="Tekaia F."/>
            <person name="Wesolowski-Louvel M."/>
            <person name="Westhof E."/>
            <person name="Wirth B."/>
            <person name="Zeniou-Meyer M."/>
            <person name="Zivanovic Y."/>
            <person name="Bolotin-Fukuhara M."/>
            <person name="Thierry A."/>
            <person name="Bouchier C."/>
            <person name="Caudron B."/>
            <person name="Scarpelli C."/>
            <person name="Gaillardin C."/>
            <person name="Weissenbach J."/>
            <person name="Wincker P."/>
            <person name="Souciet J.-L."/>
        </authorList>
    </citation>
    <scope>NUCLEOTIDE SEQUENCE [LARGE SCALE GENOMIC DNA]</scope>
    <source>
        <strain>CLIB 122 / E 150</strain>
    </source>
</reference>
<organism>
    <name type="scientific">Yarrowia lipolytica (strain CLIB 122 / E 150)</name>
    <name type="common">Yeast</name>
    <name type="synonym">Candida lipolytica</name>
    <dbReference type="NCBI Taxonomy" id="284591"/>
    <lineage>
        <taxon>Eukaryota</taxon>
        <taxon>Fungi</taxon>
        <taxon>Dikarya</taxon>
        <taxon>Ascomycota</taxon>
        <taxon>Saccharomycotina</taxon>
        <taxon>Dipodascomycetes</taxon>
        <taxon>Dipodascales</taxon>
        <taxon>Dipodascales incertae sedis</taxon>
        <taxon>Yarrowia</taxon>
    </lineage>
</organism>
<keyword id="KW-0342">GTP-binding</keyword>
<keyword id="KW-0378">Hydrolase</keyword>
<keyword id="KW-0472">Membrane</keyword>
<keyword id="KW-0496">Mitochondrion</keyword>
<keyword id="KW-0999">Mitochondrion inner membrane</keyword>
<keyword id="KW-0547">Nucleotide-binding</keyword>
<keyword id="KW-0648">Protein biosynthesis</keyword>
<keyword id="KW-1185">Reference proteome</keyword>
<keyword id="KW-0809">Transit peptide</keyword>
<name>GUF1_YARLI</name>
<feature type="transit peptide" description="Mitochondrion" evidence="1">
    <location>
        <begin position="1"/>
        <end position="28"/>
    </location>
</feature>
<feature type="chain" id="PRO_0000402909" description="Translation factor GUF1, mitochondrial">
    <location>
        <begin position="29"/>
        <end position="656"/>
    </location>
</feature>
<feature type="domain" description="tr-type G">
    <location>
        <begin position="55"/>
        <end position="235"/>
    </location>
</feature>
<feature type="binding site" evidence="1">
    <location>
        <begin position="64"/>
        <end position="71"/>
    </location>
    <ligand>
        <name>GTP</name>
        <dbReference type="ChEBI" id="CHEBI:37565"/>
    </ligand>
</feature>
<feature type="binding site" evidence="1">
    <location>
        <begin position="128"/>
        <end position="132"/>
    </location>
    <ligand>
        <name>GTP</name>
        <dbReference type="ChEBI" id="CHEBI:37565"/>
    </ligand>
</feature>
<feature type="binding site" evidence="1">
    <location>
        <begin position="182"/>
        <end position="185"/>
    </location>
    <ligand>
        <name>GTP</name>
        <dbReference type="ChEBI" id="CHEBI:37565"/>
    </ligand>
</feature>
<dbReference type="EC" id="3.6.5.-"/>
<dbReference type="EMBL" id="CR382132">
    <property type="protein sequence ID" value="CAG78064.1"/>
    <property type="molecule type" value="Genomic_DNA"/>
</dbReference>
<dbReference type="RefSeq" id="XP_505257.1">
    <property type="nucleotide sequence ID" value="XM_505257.1"/>
</dbReference>
<dbReference type="SMR" id="Q6C255"/>
<dbReference type="FunCoup" id="Q6C255">
    <property type="interactions" value="740"/>
</dbReference>
<dbReference type="STRING" id="284591.Q6C255"/>
<dbReference type="EnsemblFungi" id="CAG78064">
    <property type="protein sequence ID" value="CAG78064"/>
    <property type="gene ID" value="YALI0_F10725g"/>
</dbReference>
<dbReference type="KEGG" id="yli:2908890"/>
<dbReference type="VEuPathDB" id="FungiDB:YALI0_F10725g"/>
<dbReference type="HOGENOM" id="CLU_009995_3_1_1"/>
<dbReference type="InParanoid" id="Q6C255"/>
<dbReference type="OMA" id="QVKCDEN"/>
<dbReference type="OrthoDB" id="35348at4891"/>
<dbReference type="Proteomes" id="UP000001300">
    <property type="component" value="Chromosome F"/>
</dbReference>
<dbReference type="GO" id="GO:0005743">
    <property type="term" value="C:mitochondrial inner membrane"/>
    <property type="evidence" value="ECO:0007669"/>
    <property type="project" value="UniProtKB-SubCell"/>
</dbReference>
<dbReference type="GO" id="GO:0005759">
    <property type="term" value="C:mitochondrial matrix"/>
    <property type="evidence" value="ECO:0007669"/>
    <property type="project" value="UniProtKB-UniRule"/>
</dbReference>
<dbReference type="GO" id="GO:0005739">
    <property type="term" value="C:mitochondrion"/>
    <property type="evidence" value="ECO:0000318"/>
    <property type="project" value="GO_Central"/>
</dbReference>
<dbReference type="GO" id="GO:0005525">
    <property type="term" value="F:GTP binding"/>
    <property type="evidence" value="ECO:0007669"/>
    <property type="project" value="UniProtKB-UniRule"/>
</dbReference>
<dbReference type="GO" id="GO:0003924">
    <property type="term" value="F:GTPase activity"/>
    <property type="evidence" value="ECO:0007669"/>
    <property type="project" value="UniProtKB-UniRule"/>
</dbReference>
<dbReference type="GO" id="GO:0097177">
    <property type="term" value="F:mitochondrial ribosome binding"/>
    <property type="evidence" value="ECO:0000318"/>
    <property type="project" value="GO_Central"/>
</dbReference>
<dbReference type="GO" id="GO:0045727">
    <property type="term" value="P:positive regulation of translation"/>
    <property type="evidence" value="ECO:0000318"/>
    <property type="project" value="GO_Central"/>
</dbReference>
<dbReference type="GO" id="GO:0006412">
    <property type="term" value="P:translation"/>
    <property type="evidence" value="ECO:0007669"/>
    <property type="project" value="UniProtKB-KW"/>
</dbReference>
<dbReference type="CDD" id="cd03699">
    <property type="entry name" value="EF4_II"/>
    <property type="match status" value="1"/>
</dbReference>
<dbReference type="CDD" id="cd16260">
    <property type="entry name" value="EF4_III"/>
    <property type="match status" value="1"/>
</dbReference>
<dbReference type="CDD" id="cd01890">
    <property type="entry name" value="LepA"/>
    <property type="match status" value="1"/>
</dbReference>
<dbReference type="CDD" id="cd03709">
    <property type="entry name" value="lepA_C"/>
    <property type="match status" value="1"/>
</dbReference>
<dbReference type="FunFam" id="3.40.50.300:FF:000078">
    <property type="entry name" value="Elongation factor 4"/>
    <property type="match status" value="1"/>
</dbReference>
<dbReference type="FunFam" id="2.40.30.10:FF:000015">
    <property type="entry name" value="Translation factor GUF1, mitochondrial"/>
    <property type="match status" value="1"/>
</dbReference>
<dbReference type="FunFam" id="3.30.70.240:FF:000007">
    <property type="entry name" value="Translation factor GUF1, mitochondrial"/>
    <property type="match status" value="1"/>
</dbReference>
<dbReference type="FunFam" id="3.30.70.2570:FF:000001">
    <property type="entry name" value="Translation factor GUF1, mitochondrial"/>
    <property type="match status" value="1"/>
</dbReference>
<dbReference type="FunFam" id="3.30.70.870:FF:000004">
    <property type="entry name" value="Translation factor GUF1, mitochondrial"/>
    <property type="match status" value="1"/>
</dbReference>
<dbReference type="Gene3D" id="3.30.70.240">
    <property type="match status" value="1"/>
</dbReference>
<dbReference type="Gene3D" id="3.30.70.2570">
    <property type="entry name" value="Elongation factor 4, C-terminal domain"/>
    <property type="match status" value="1"/>
</dbReference>
<dbReference type="Gene3D" id="3.30.70.870">
    <property type="entry name" value="Elongation Factor G (Translational Gtpase), domain 3"/>
    <property type="match status" value="1"/>
</dbReference>
<dbReference type="Gene3D" id="3.40.50.300">
    <property type="entry name" value="P-loop containing nucleotide triphosphate hydrolases"/>
    <property type="match status" value="1"/>
</dbReference>
<dbReference type="Gene3D" id="2.40.30.10">
    <property type="entry name" value="Translation factors"/>
    <property type="match status" value="1"/>
</dbReference>
<dbReference type="HAMAP" id="MF_00071">
    <property type="entry name" value="LepA"/>
    <property type="match status" value="1"/>
</dbReference>
<dbReference type="InterPro" id="IPR006297">
    <property type="entry name" value="EF-4"/>
</dbReference>
<dbReference type="InterPro" id="IPR035647">
    <property type="entry name" value="EFG_III/V"/>
</dbReference>
<dbReference type="InterPro" id="IPR000640">
    <property type="entry name" value="EFG_V-like"/>
</dbReference>
<dbReference type="InterPro" id="IPR004161">
    <property type="entry name" value="EFTu-like_2"/>
</dbReference>
<dbReference type="InterPro" id="IPR031157">
    <property type="entry name" value="G_TR_CS"/>
</dbReference>
<dbReference type="InterPro" id="IPR038363">
    <property type="entry name" value="LepA_C_sf"/>
</dbReference>
<dbReference type="InterPro" id="IPR013842">
    <property type="entry name" value="LepA_CTD"/>
</dbReference>
<dbReference type="InterPro" id="IPR035654">
    <property type="entry name" value="LepA_IV"/>
</dbReference>
<dbReference type="InterPro" id="IPR027417">
    <property type="entry name" value="P-loop_NTPase"/>
</dbReference>
<dbReference type="InterPro" id="IPR005225">
    <property type="entry name" value="Small_GTP-bd"/>
</dbReference>
<dbReference type="InterPro" id="IPR000795">
    <property type="entry name" value="T_Tr_GTP-bd_dom"/>
</dbReference>
<dbReference type="InterPro" id="IPR009000">
    <property type="entry name" value="Transl_B-barrel_sf"/>
</dbReference>
<dbReference type="NCBIfam" id="TIGR01393">
    <property type="entry name" value="lepA"/>
    <property type="match status" value="1"/>
</dbReference>
<dbReference type="NCBIfam" id="TIGR00231">
    <property type="entry name" value="small_GTP"/>
    <property type="match status" value="1"/>
</dbReference>
<dbReference type="PANTHER" id="PTHR43512:SF7">
    <property type="entry name" value="TRANSLATION FACTOR GUF1, MITOCHONDRIAL"/>
    <property type="match status" value="1"/>
</dbReference>
<dbReference type="PANTHER" id="PTHR43512">
    <property type="entry name" value="TRANSLATION FACTOR GUF1-RELATED"/>
    <property type="match status" value="1"/>
</dbReference>
<dbReference type="Pfam" id="PF00679">
    <property type="entry name" value="EFG_C"/>
    <property type="match status" value="1"/>
</dbReference>
<dbReference type="Pfam" id="PF00009">
    <property type="entry name" value="GTP_EFTU"/>
    <property type="match status" value="1"/>
</dbReference>
<dbReference type="Pfam" id="PF03144">
    <property type="entry name" value="GTP_EFTU_D2"/>
    <property type="match status" value="1"/>
</dbReference>
<dbReference type="Pfam" id="PF06421">
    <property type="entry name" value="LepA_C"/>
    <property type="match status" value="1"/>
</dbReference>
<dbReference type="PRINTS" id="PR00315">
    <property type="entry name" value="ELONGATNFCT"/>
</dbReference>
<dbReference type="SUPFAM" id="SSF54980">
    <property type="entry name" value="EF-G C-terminal domain-like"/>
    <property type="match status" value="2"/>
</dbReference>
<dbReference type="SUPFAM" id="SSF52540">
    <property type="entry name" value="P-loop containing nucleoside triphosphate hydrolases"/>
    <property type="match status" value="1"/>
</dbReference>
<dbReference type="SUPFAM" id="SSF50447">
    <property type="entry name" value="Translation proteins"/>
    <property type="match status" value="1"/>
</dbReference>
<dbReference type="PROSITE" id="PS00301">
    <property type="entry name" value="G_TR_1"/>
    <property type="match status" value="1"/>
</dbReference>
<dbReference type="PROSITE" id="PS51722">
    <property type="entry name" value="G_TR_2"/>
    <property type="match status" value="1"/>
</dbReference>
<protein>
    <recommendedName>
        <fullName evidence="1">Translation factor GUF1, mitochondrial</fullName>
        <ecNumber>3.6.5.-</ecNumber>
    </recommendedName>
    <alternativeName>
        <fullName evidence="1">Elongation factor 4 homolog</fullName>
        <shortName evidence="1">EF-4</shortName>
    </alternativeName>
    <alternativeName>
        <fullName evidence="1">GTPase GUF1</fullName>
    </alternativeName>
    <alternativeName>
        <fullName evidence="1">Ribosomal back-translocase</fullName>
    </alternativeName>
</protein>
<comment type="function">
    <text evidence="1">Promotes mitochondrial protein synthesis. May act as a fidelity factor of the translation reaction, by catalyzing a one-codon backward translocation of tRNAs on improperly translocated ribosomes. Binds to mitochondrial ribosomes in a GTP-dependent manner.</text>
</comment>
<comment type="catalytic activity">
    <reaction evidence="1">
        <text>GTP + H2O = GDP + phosphate + H(+)</text>
        <dbReference type="Rhea" id="RHEA:19669"/>
        <dbReference type="ChEBI" id="CHEBI:15377"/>
        <dbReference type="ChEBI" id="CHEBI:15378"/>
        <dbReference type="ChEBI" id="CHEBI:37565"/>
        <dbReference type="ChEBI" id="CHEBI:43474"/>
        <dbReference type="ChEBI" id="CHEBI:58189"/>
    </reaction>
</comment>
<comment type="subcellular location">
    <subcellularLocation>
        <location evidence="1">Mitochondrion inner membrane</location>
        <topology evidence="1">Peripheral membrane protein</topology>
        <orientation evidence="1">Matrix side</orientation>
    </subcellularLocation>
</comment>
<comment type="similarity">
    <text evidence="2">Belongs to the TRAFAC class translation factor GTPase superfamily. Classic translation factor GTPase family. LepA subfamily.</text>
</comment>
<accession>Q6C255</accession>
<gene>
    <name evidence="1" type="primary">GUF1</name>
    <name type="ordered locus">YALI0F10725g</name>
</gene>
<proteinExistence type="inferred from homology"/>
<evidence type="ECO:0000255" key="1">
    <source>
        <dbReference type="HAMAP-Rule" id="MF_03137"/>
    </source>
</evidence>
<evidence type="ECO:0000305" key="2"/>